<keyword id="KW-0175">Coiled coil</keyword>
<keyword id="KW-1015">Disulfide bond</keyword>
<keyword id="KW-0325">Glycoprotein</keyword>
<keyword id="KW-1185">Reference proteome</keyword>
<keyword id="KW-0964">Secreted</keyword>
<keyword id="KW-0732">Signal</keyword>
<dbReference type="EMBL" id="AAFI02000024">
    <property type="protein sequence ID" value="EAS66890.1"/>
    <property type="molecule type" value="Genomic_DNA"/>
</dbReference>
<dbReference type="RefSeq" id="XP_001134574.1">
    <property type="nucleotide sequence ID" value="XM_001134574.1"/>
</dbReference>
<dbReference type="SMR" id="Q1ZXI3"/>
<dbReference type="FunCoup" id="Q1ZXI3">
    <property type="interactions" value="644"/>
</dbReference>
<dbReference type="STRING" id="44689.Q1ZXI3"/>
<dbReference type="GlyGen" id="Q1ZXI3">
    <property type="glycosylation" value="2 sites"/>
</dbReference>
<dbReference type="PaxDb" id="44689-DDB0232937"/>
<dbReference type="EnsemblProtists" id="EAS66890">
    <property type="protein sequence ID" value="EAS66890"/>
    <property type="gene ID" value="DDB_G0278881"/>
</dbReference>
<dbReference type="GeneID" id="8621756"/>
<dbReference type="KEGG" id="ddi:DDB_G0278881"/>
<dbReference type="dictyBase" id="DDB_G0278881"/>
<dbReference type="VEuPathDB" id="AmoebaDB:DDB_G0278881"/>
<dbReference type="eggNOG" id="ENOG502RI9I">
    <property type="taxonomic scope" value="Eukaryota"/>
</dbReference>
<dbReference type="HOGENOM" id="CLU_744809_0_0_1"/>
<dbReference type="InParanoid" id="Q1ZXI3"/>
<dbReference type="OMA" id="FAYINDY"/>
<dbReference type="PRO" id="PR:Q1ZXI3"/>
<dbReference type="Proteomes" id="UP000002195">
    <property type="component" value="Chromosome 3"/>
</dbReference>
<dbReference type="GO" id="GO:0005576">
    <property type="term" value="C:extracellular region"/>
    <property type="evidence" value="ECO:0007669"/>
    <property type="project" value="UniProtKB-SubCell"/>
</dbReference>
<dbReference type="Gene3D" id="2.70.130.10">
    <property type="entry name" value="Mannose-6-phosphate receptor binding domain"/>
    <property type="match status" value="1"/>
</dbReference>
<dbReference type="InterPro" id="IPR009011">
    <property type="entry name" value="Man6P_isomerase_rcpt-bd_dom_sf"/>
</dbReference>
<dbReference type="InterPro" id="IPR044865">
    <property type="entry name" value="MRH_dom"/>
</dbReference>
<dbReference type="SUPFAM" id="SSF50911">
    <property type="entry name" value="Mannose 6-phosphate receptor domain"/>
    <property type="match status" value="1"/>
</dbReference>
<dbReference type="PROSITE" id="PS51914">
    <property type="entry name" value="MRH"/>
    <property type="match status" value="1"/>
</dbReference>
<comment type="subcellular location">
    <subcellularLocation>
        <location evidence="4">Secreted</location>
    </subcellularLocation>
</comment>
<name>Y7888_DICDI</name>
<sequence>MKIFFLFIILLGIIQLSNSSSCNIDIAGDSFDLTPLKKIDGYHKVISDYGDIVYFNFCNTTIDTPCGNSALAYFFDGSTGECHSLGVQEFYSLNSYEEKKTLLINIRGGDIAYDSMVKMLEMFIAFTCDESDDTSEPSLINTMEYGYASVIWTTKYSCAIKTPNVEKKLITNENQNNNNFQFENNEILNEAQSNAFEISNKNEDLNNNNNNNNNNNNNNNNNNNNNNNNNKINSGISFLQRLNQMSQTINNRNEYQQFEEQQNEMQENRAEIVQFNDDIKLIDLEQKQPFYNDDQLMSQTNDDIEFEQDQTNFDTVNDDEIANQINDFMNNFEKTQNLDGDYINQEKIIPNIIMEDTKPNDLTQNFEIENEF</sequence>
<organism>
    <name type="scientific">Dictyostelium discoideum</name>
    <name type="common">Social amoeba</name>
    <dbReference type="NCBI Taxonomy" id="44689"/>
    <lineage>
        <taxon>Eukaryota</taxon>
        <taxon>Amoebozoa</taxon>
        <taxon>Evosea</taxon>
        <taxon>Eumycetozoa</taxon>
        <taxon>Dictyostelia</taxon>
        <taxon>Dictyosteliales</taxon>
        <taxon>Dictyosteliaceae</taxon>
        <taxon>Dictyostelium</taxon>
    </lineage>
</organism>
<feature type="signal peptide" evidence="1">
    <location>
        <begin position="1"/>
        <end position="19"/>
    </location>
</feature>
<feature type="chain" id="PRO_0000388777" description="Putative uncharacterized protein DDB_G0278881">
    <location>
        <begin position="20"/>
        <end position="372"/>
    </location>
</feature>
<feature type="domain" description="MRH" evidence="2">
    <location>
        <begin position="20"/>
        <end position="160"/>
    </location>
</feature>
<feature type="region of interest" description="Disordered" evidence="3">
    <location>
        <begin position="201"/>
        <end position="233"/>
    </location>
</feature>
<feature type="coiled-coil region" evidence="1">
    <location>
        <begin position="185"/>
        <end position="282"/>
    </location>
</feature>
<feature type="compositionally biased region" description="Low complexity" evidence="3">
    <location>
        <begin position="206"/>
        <end position="230"/>
    </location>
</feature>
<feature type="glycosylation site" description="N-linked (GlcNAc...) asparagine" evidence="1">
    <location>
        <position position="18"/>
    </location>
</feature>
<feature type="glycosylation site" description="N-linked (GlcNAc...) asparagine" evidence="1">
    <location>
        <position position="59"/>
    </location>
</feature>
<feature type="disulfide bond" evidence="2">
    <location>
        <begin position="22"/>
        <end position="58"/>
    </location>
</feature>
<feature type="disulfide bond" evidence="2">
    <location>
        <begin position="128"/>
        <end position="158"/>
    </location>
</feature>
<proteinExistence type="inferred from homology"/>
<reference key="1">
    <citation type="journal article" date="2005" name="Nature">
        <title>The genome of the social amoeba Dictyostelium discoideum.</title>
        <authorList>
            <person name="Eichinger L."/>
            <person name="Pachebat J.A."/>
            <person name="Gloeckner G."/>
            <person name="Rajandream M.A."/>
            <person name="Sucgang R."/>
            <person name="Berriman M."/>
            <person name="Song J."/>
            <person name="Olsen R."/>
            <person name="Szafranski K."/>
            <person name="Xu Q."/>
            <person name="Tunggal B."/>
            <person name="Kummerfeld S."/>
            <person name="Madera M."/>
            <person name="Konfortov B.A."/>
            <person name="Rivero F."/>
            <person name="Bankier A.T."/>
            <person name="Lehmann R."/>
            <person name="Hamlin N."/>
            <person name="Davies R."/>
            <person name="Gaudet P."/>
            <person name="Fey P."/>
            <person name="Pilcher K."/>
            <person name="Chen G."/>
            <person name="Saunders D."/>
            <person name="Sodergren E.J."/>
            <person name="Davis P."/>
            <person name="Kerhornou A."/>
            <person name="Nie X."/>
            <person name="Hall N."/>
            <person name="Anjard C."/>
            <person name="Hemphill L."/>
            <person name="Bason N."/>
            <person name="Farbrother P."/>
            <person name="Desany B."/>
            <person name="Just E."/>
            <person name="Morio T."/>
            <person name="Rost R."/>
            <person name="Churcher C.M."/>
            <person name="Cooper J."/>
            <person name="Haydock S."/>
            <person name="van Driessche N."/>
            <person name="Cronin A."/>
            <person name="Goodhead I."/>
            <person name="Muzny D.M."/>
            <person name="Mourier T."/>
            <person name="Pain A."/>
            <person name="Lu M."/>
            <person name="Harper D."/>
            <person name="Lindsay R."/>
            <person name="Hauser H."/>
            <person name="James K.D."/>
            <person name="Quiles M."/>
            <person name="Madan Babu M."/>
            <person name="Saito T."/>
            <person name="Buchrieser C."/>
            <person name="Wardroper A."/>
            <person name="Felder M."/>
            <person name="Thangavelu M."/>
            <person name="Johnson D."/>
            <person name="Knights A."/>
            <person name="Loulseged H."/>
            <person name="Mungall K.L."/>
            <person name="Oliver K."/>
            <person name="Price C."/>
            <person name="Quail M.A."/>
            <person name="Urushihara H."/>
            <person name="Hernandez J."/>
            <person name="Rabbinowitsch E."/>
            <person name="Steffen D."/>
            <person name="Sanders M."/>
            <person name="Ma J."/>
            <person name="Kohara Y."/>
            <person name="Sharp S."/>
            <person name="Simmonds M.N."/>
            <person name="Spiegler S."/>
            <person name="Tivey A."/>
            <person name="Sugano S."/>
            <person name="White B."/>
            <person name="Walker D."/>
            <person name="Woodward J.R."/>
            <person name="Winckler T."/>
            <person name="Tanaka Y."/>
            <person name="Shaulsky G."/>
            <person name="Schleicher M."/>
            <person name="Weinstock G.M."/>
            <person name="Rosenthal A."/>
            <person name="Cox E.C."/>
            <person name="Chisholm R.L."/>
            <person name="Gibbs R.A."/>
            <person name="Loomis W.F."/>
            <person name="Platzer M."/>
            <person name="Kay R.R."/>
            <person name="Williams J.G."/>
            <person name="Dear P.H."/>
            <person name="Noegel A.A."/>
            <person name="Barrell B.G."/>
            <person name="Kuspa A."/>
        </authorList>
    </citation>
    <scope>NUCLEOTIDE SEQUENCE [LARGE SCALE GENOMIC DNA]</scope>
    <source>
        <strain>AX4</strain>
    </source>
</reference>
<protein>
    <recommendedName>
        <fullName>Putative uncharacterized protein DDB_G0278881</fullName>
    </recommendedName>
</protein>
<evidence type="ECO:0000255" key="1"/>
<evidence type="ECO:0000255" key="2">
    <source>
        <dbReference type="PROSITE-ProRule" id="PRU01262"/>
    </source>
</evidence>
<evidence type="ECO:0000256" key="3">
    <source>
        <dbReference type="SAM" id="MobiDB-lite"/>
    </source>
</evidence>
<evidence type="ECO:0000305" key="4"/>
<accession>Q1ZXI3</accession>
<gene>
    <name type="ORF">DDB_G0278881</name>
</gene>